<feature type="chain" id="PRO_0000360318" description="NAD(P)H-quinone oxidoreductase subunit 4L, chloroplastic">
    <location>
        <begin position="1"/>
        <end position="101"/>
    </location>
</feature>
<feature type="transmembrane region" description="Helical" evidence="1">
    <location>
        <begin position="2"/>
        <end position="22"/>
    </location>
</feature>
<feature type="transmembrane region" description="Helical" evidence="1">
    <location>
        <begin position="32"/>
        <end position="52"/>
    </location>
</feature>
<feature type="transmembrane region" description="Helical" evidence="1">
    <location>
        <begin position="61"/>
        <end position="81"/>
    </location>
</feature>
<keyword id="KW-0150">Chloroplast</keyword>
<keyword id="KW-0472">Membrane</keyword>
<keyword id="KW-0520">NAD</keyword>
<keyword id="KW-0521">NADP</keyword>
<keyword id="KW-0934">Plastid</keyword>
<keyword id="KW-0618">Plastoquinone</keyword>
<keyword id="KW-0874">Quinone</keyword>
<keyword id="KW-0793">Thylakoid</keyword>
<keyword id="KW-1278">Translocase</keyword>
<keyword id="KW-0812">Transmembrane</keyword>
<keyword id="KW-1133">Transmembrane helix</keyword>
<keyword id="KW-0813">Transport</keyword>
<geneLocation type="chloroplast"/>
<name>NU4LC_CITSI</name>
<reference key="1">
    <citation type="journal article" date="2006" name="BMC Plant Biol.">
        <title>The complete chloroplast genome sequence of Citrus sinensis (L.) Osbeck var 'Ridge Pineapple': organization and phylogenetic relationships to other angiosperms.</title>
        <authorList>
            <person name="Bausher M.G."/>
            <person name="Singh N.D."/>
            <person name="Lee S.-B."/>
            <person name="Jansen R.K."/>
            <person name="Daniell H."/>
        </authorList>
    </citation>
    <scope>NUCLEOTIDE SEQUENCE [LARGE SCALE GENOMIC DNA]</scope>
    <source>
        <strain>cv. Osbeck var. Ridge Pineapple</strain>
    </source>
</reference>
<sequence>MMLEHVLVLSAYLFSIGIYGLITSRNMVRALMCLELILNAVNINFVTFSDFFDSRQLKGDIFSIFVIAIAAAEAAIGSAIVSSIYRNRKSTRINQSTLLNK</sequence>
<dbReference type="EC" id="7.1.1.-" evidence="1"/>
<dbReference type="EMBL" id="DQ864733">
    <property type="protein sequence ID" value="ABI49073.1"/>
    <property type="molecule type" value="Genomic_DNA"/>
</dbReference>
<dbReference type="RefSeq" id="YP_740529.1">
    <property type="nucleotide sequence ID" value="NC_008334.1"/>
</dbReference>
<dbReference type="SMR" id="Q09MC4"/>
<dbReference type="GeneID" id="4271141"/>
<dbReference type="KEGG" id="cit:4271141"/>
<dbReference type="OrthoDB" id="880195at71240"/>
<dbReference type="GO" id="GO:0009535">
    <property type="term" value="C:chloroplast thylakoid membrane"/>
    <property type="evidence" value="ECO:0007669"/>
    <property type="project" value="UniProtKB-SubCell"/>
</dbReference>
<dbReference type="GO" id="GO:0016655">
    <property type="term" value="F:oxidoreductase activity, acting on NAD(P)H, quinone or similar compound as acceptor"/>
    <property type="evidence" value="ECO:0007669"/>
    <property type="project" value="UniProtKB-UniRule"/>
</dbReference>
<dbReference type="GO" id="GO:0048038">
    <property type="term" value="F:quinone binding"/>
    <property type="evidence" value="ECO:0007669"/>
    <property type="project" value="UniProtKB-KW"/>
</dbReference>
<dbReference type="GO" id="GO:0042773">
    <property type="term" value="P:ATP synthesis coupled electron transport"/>
    <property type="evidence" value="ECO:0007669"/>
    <property type="project" value="InterPro"/>
</dbReference>
<dbReference type="GO" id="GO:0019684">
    <property type="term" value="P:photosynthesis, light reaction"/>
    <property type="evidence" value="ECO:0007669"/>
    <property type="project" value="UniProtKB-UniRule"/>
</dbReference>
<dbReference type="FunFam" id="1.10.287.3510:FF:000001">
    <property type="entry name" value="NADH-quinone oxidoreductase subunit K"/>
    <property type="match status" value="1"/>
</dbReference>
<dbReference type="Gene3D" id="1.10.287.3510">
    <property type="match status" value="1"/>
</dbReference>
<dbReference type="HAMAP" id="MF_01456">
    <property type="entry name" value="NDH1_NuoK"/>
    <property type="match status" value="1"/>
</dbReference>
<dbReference type="InterPro" id="IPR001133">
    <property type="entry name" value="NADH_UbQ_OxRdtase_chain4L/K"/>
</dbReference>
<dbReference type="InterPro" id="IPR039428">
    <property type="entry name" value="NUOK/Mnh_C1-like"/>
</dbReference>
<dbReference type="NCBIfam" id="NF004320">
    <property type="entry name" value="PRK05715.1-2"/>
    <property type="match status" value="1"/>
</dbReference>
<dbReference type="NCBIfam" id="NF004322">
    <property type="entry name" value="PRK05715.1-4"/>
    <property type="match status" value="1"/>
</dbReference>
<dbReference type="NCBIfam" id="NF004323">
    <property type="entry name" value="PRK05715.1-5"/>
    <property type="match status" value="1"/>
</dbReference>
<dbReference type="PANTHER" id="PTHR11434:SF16">
    <property type="entry name" value="NADH-UBIQUINONE OXIDOREDUCTASE CHAIN 4L"/>
    <property type="match status" value="1"/>
</dbReference>
<dbReference type="PANTHER" id="PTHR11434">
    <property type="entry name" value="NADH-UBIQUINONE OXIDOREDUCTASE SUBUNIT ND4L"/>
    <property type="match status" value="1"/>
</dbReference>
<dbReference type="Pfam" id="PF00420">
    <property type="entry name" value="Oxidored_q2"/>
    <property type="match status" value="1"/>
</dbReference>
<accession>Q09MC4</accession>
<evidence type="ECO:0000255" key="1">
    <source>
        <dbReference type="HAMAP-Rule" id="MF_01456"/>
    </source>
</evidence>
<protein>
    <recommendedName>
        <fullName evidence="1">NAD(P)H-quinone oxidoreductase subunit 4L, chloroplastic</fullName>
        <ecNumber evidence="1">7.1.1.-</ecNumber>
    </recommendedName>
    <alternativeName>
        <fullName evidence="1">NAD(P)H dehydrogenase subunit 4L</fullName>
    </alternativeName>
    <alternativeName>
        <fullName evidence="1">NADH-plastoquinone oxidoreductase subunit 4L</fullName>
    </alternativeName>
</protein>
<comment type="function">
    <text evidence="1">NDH shuttles electrons from NAD(P)H:plastoquinone, via FMN and iron-sulfur (Fe-S) centers, to quinones in the photosynthetic chain and possibly in a chloroplast respiratory chain. The immediate electron acceptor for the enzyme in this species is believed to be plastoquinone. Couples the redox reaction to proton translocation, and thus conserves the redox energy in a proton gradient.</text>
</comment>
<comment type="catalytic activity">
    <reaction evidence="1">
        <text>a plastoquinone + NADH + (n+1) H(+)(in) = a plastoquinol + NAD(+) + n H(+)(out)</text>
        <dbReference type="Rhea" id="RHEA:42608"/>
        <dbReference type="Rhea" id="RHEA-COMP:9561"/>
        <dbReference type="Rhea" id="RHEA-COMP:9562"/>
        <dbReference type="ChEBI" id="CHEBI:15378"/>
        <dbReference type="ChEBI" id="CHEBI:17757"/>
        <dbReference type="ChEBI" id="CHEBI:57540"/>
        <dbReference type="ChEBI" id="CHEBI:57945"/>
        <dbReference type="ChEBI" id="CHEBI:62192"/>
    </reaction>
</comment>
<comment type="catalytic activity">
    <reaction evidence="1">
        <text>a plastoquinone + NADPH + (n+1) H(+)(in) = a plastoquinol + NADP(+) + n H(+)(out)</text>
        <dbReference type="Rhea" id="RHEA:42612"/>
        <dbReference type="Rhea" id="RHEA-COMP:9561"/>
        <dbReference type="Rhea" id="RHEA-COMP:9562"/>
        <dbReference type="ChEBI" id="CHEBI:15378"/>
        <dbReference type="ChEBI" id="CHEBI:17757"/>
        <dbReference type="ChEBI" id="CHEBI:57783"/>
        <dbReference type="ChEBI" id="CHEBI:58349"/>
        <dbReference type="ChEBI" id="CHEBI:62192"/>
    </reaction>
</comment>
<comment type="subunit">
    <text evidence="1">NDH is composed of at least 16 different subunits, 5 of which are encoded in the nucleus.</text>
</comment>
<comment type="subcellular location">
    <subcellularLocation>
        <location evidence="1">Plastid</location>
        <location evidence="1">Chloroplast thylakoid membrane</location>
        <topology evidence="1">Multi-pass membrane protein</topology>
    </subcellularLocation>
</comment>
<comment type="similarity">
    <text evidence="1">Belongs to the complex I subunit 4L family.</text>
</comment>
<proteinExistence type="inferred from homology"/>
<organism>
    <name type="scientific">Citrus sinensis</name>
    <name type="common">Sweet orange</name>
    <name type="synonym">Citrus aurantium var. sinensis</name>
    <dbReference type="NCBI Taxonomy" id="2711"/>
    <lineage>
        <taxon>Eukaryota</taxon>
        <taxon>Viridiplantae</taxon>
        <taxon>Streptophyta</taxon>
        <taxon>Embryophyta</taxon>
        <taxon>Tracheophyta</taxon>
        <taxon>Spermatophyta</taxon>
        <taxon>Magnoliopsida</taxon>
        <taxon>eudicotyledons</taxon>
        <taxon>Gunneridae</taxon>
        <taxon>Pentapetalae</taxon>
        <taxon>rosids</taxon>
        <taxon>malvids</taxon>
        <taxon>Sapindales</taxon>
        <taxon>Rutaceae</taxon>
        <taxon>Aurantioideae</taxon>
        <taxon>Citrus</taxon>
    </lineage>
</organism>
<gene>
    <name evidence="1" type="primary">ndhE</name>
</gene>